<reference key="1">
    <citation type="submission" date="2000-10" db="EMBL/GenBank/DDBJ databases">
        <title>Molecular cloning, expression, and characterization of inorganic pyrophosphatase from Aquifex pyrophilus.</title>
        <authorList>
            <person name="Hoe H.-S."/>
            <person name="Kim H.-K."/>
            <person name="Kwon S.-T."/>
        </authorList>
    </citation>
    <scope>NUCLEOTIDE SEQUENCE [GENOMIC DNA]</scope>
</reference>
<dbReference type="EC" id="3.6.1.1" evidence="1"/>
<dbReference type="EMBL" id="AF312862">
    <property type="protein sequence ID" value="AAN39919.1"/>
    <property type="molecule type" value="Genomic_DNA"/>
</dbReference>
<dbReference type="SMR" id="Q8GQS5"/>
<dbReference type="GO" id="GO:0005737">
    <property type="term" value="C:cytoplasm"/>
    <property type="evidence" value="ECO:0007669"/>
    <property type="project" value="UniProtKB-SubCell"/>
</dbReference>
<dbReference type="GO" id="GO:0004427">
    <property type="term" value="F:inorganic diphosphate phosphatase activity"/>
    <property type="evidence" value="ECO:0007669"/>
    <property type="project" value="UniProtKB-UniRule"/>
</dbReference>
<dbReference type="GO" id="GO:0000287">
    <property type="term" value="F:magnesium ion binding"/>
    <property type="evidence" value="ECO:0007669"/>
    <property type="project" value="UniProtKB-UniRule"/>
</dbReference>
<dbReference type="GO" id="GO:0006796">
    <property type="term" value="P:phosphate-containing compound metabolic process"/>
    <property type="evidence" value="ECO:0007669"/>
    <property type="project" value="InterPro"/>
</dbReference>
<dbReference type="CDD" id="cd00412">
    <property type="entry name" value="pyrophosphatase"/>
    <property type="match status" value="1"/>
</dbReference>
<dbReference type="FunFam" id="3.90.80.10:FF:000001">
    <property type="entry name" value="Inorganic pyrophosphatase"/>
    <property type="match status" value="1"/>
</dbReference>
<dbReference type="Gene3D" id="3.90.80.10">
    <property type="entry name" value="Inorganic pyrophosphatase"/>
    <property type="match status" value="1"/>
</dbReference>
<dbReference type="HAMAP" id="MF_00209">
    <property type="entry name" value="Inorganic_PPase"/>
    <property type="match status" value="1"/>
</dbReference>
<dbReference type="InterPro" id="IPR008162">
    <property type="entry name" value="Pyrophosphatase"/>
</dbReference>
<dbReference type="InterPro" id="IPR036649">
    <property type="entry name" value="Pyrophosphatase_sf"/>
</dbReference>
<dbReference type="NCBIfam" id="NF002317">
    <property type="entry name" value="PRK01250.1"/>
    <property type="match status" value="1"/>
</dbReference>
<dbReference type="PANTHER" id="PTHR10286">
    <property type="entry name" value="INORGANIC PYROPHOSPHATASE"/>
    <property type="match status" value="1"/>
</dbReference>
<dbReference type="Pfam" id="PF00719">
    <property type="entry name" value="Pyrophosphatase"/>
    <property type="match status" value="1"/>
</dbReference>
<dbReference type="SUPFAM" id="SSF50324">
    <property type="entry name" value="Inorganic pyrophosphatase"/>
    <property type="match status" value="1"/>
</dbReference>
<dbReference type="PROSITE" id="PS00387">
    <property type="entry name" value="PPASE"/>
    <property type="match status" value="1"/>
</dbReference>
<organism>
    <name type="scientific">Aquifex pyrophilus</name>
    <dbReference type="NCBI Taxonomy" id="2714"/>
    <lineage>
        <taxon>Bacteria</taxon>
        <taxon>Pseudomonadati</taxon>
        <taxon>Aquificota</taxon>
        <taxon>Aquificia</taxon>
        <taxon>Aquificales</taxon>
        <taxon>Aquificaceae</taxon>
        <taxon>Aquifex</taxon>
    </lineage>
</organism>
<protein>
    <recommendedName>
        <fullName evidence="1">Inorganic pyrophosphatase</fullName>
        <ecNumber evidence="1">3.6.1.1</ecNumber>
    </recommendedName>
    <alternativeName>
        <fullName evidence="1">Pyrophosphate phospho-hydrolase</fullName>
        <shortName evidence="1">PPase</shortName>
    </alternativeName>
</protein>
<comment type="function">
    <text evidence="1">Catalyzes the hydrolysis of inorganic pyrophosphate (PPi) forming two phosphate ions.</text>
</comment>
<comment type="catalytic activity">
    <reaction evidence="1">
        <text>diphosphate + H2O = 2 phosphate + H(+)</text>
        <dbReference type="Rhea" id="RHEA:24576"/>
        <dbReference type="ChEBI" id="CHEBI:15377"/>
        <dbReference type="ChEBI" id="CHEBI:15378"/>
        <dbReference type="ChEBI" id="CHEBI:33019"/>
        <dbReference type="ChEBI" id="CHEBI:43474"/>
        <dbReference type="EC" id="3.6.1.1"/>
    </reaction>
</comment>
<comment type="cofactor">
    <cofactor evidence="1">
        <name>Mg(2+)</name>
        <dbReference type="ChEBI" id="CHEBI:18420"/>
    </cofactor>
</comment>
<comment type="subunit">
    <text evidence="1">Homohexamer.</text>
</comment>
<comment type="subcellular location">
    <subcellularLocation>
        <location evidence="1">Cytoplasm</location>
    </subcellularLocation>
</comment>
<comment type="similarity">
    <text evidence="1">Belongs to the PPase family.</text>
</comment>
<name>IPYR_AQUPY</name>
<accession>Q8GQS5</accession>
<evidence type="ECO:0000255" key="1">
    <source>
        <dbReference type="HAMAP-Rule" id="MF_00209"/>
    </source>
</evidence>
<sequence>MGYKDLPPGKNPPEDIYVVIEIPQGSGIKYELDKDTGVIFVDRFLFTAMYYPFNYGFIPQTLADDGDPVDVLVISREPVAPGSVMRCRPIGMLEMRDEEGIDTKLIAVPHEKLDPTYSDIKTVDQLPEIIRERIKHFFEHYKELEPGKWVKVENWRGLQDAIEEIKKGIENYKKGGK</sequence>
<gene>
    <name evidence="1" type="primary">ppa</name>
</gene>
<proteinExistence type="inferred from homology"/>
<feature type="chain" id="PRO_0000137476" description="Inorganic pyrophosphatase">
    <location>
        <begin position="1"/>
        <end position="177"/>
    </location>
</feature>
<feature type="binding site" evidence="1">
    <location>
        <position position="29"/>
    </location>
    <ligand>
        <name>substrate</name>
    </ligand>
</feature>
<feature type="binding site" evidence="1">
    <location>
        <position position="43"/>
    </location>
    <ligand>
        <name>substrate</name>
    </ligand>
</feature>
<feature type="binding site" evidence="1">
    <location>
        <position position="55"/>
    </location>
    <ligand>
        <name>substrate</name>
    </ligand>
</feature>
<feature type="binding site" evidence="1">
    <location>
        <position position="65"/>
    </location>
    <ligand>
        <name>Mg(2+)</name>
        <dbReference type="ChEBI" id="CHEBI:18420"/>
        <label>1</label>
    </ligand>
</feature>
<feature type="binding site" evidence="1">
    <location>
        <position position="70"/>
    </location>
    <ligand>
        <name>Mg(2+)</name>
        <dbReference type="ChEBI" id="CHEBI:18420"/>
        <label>1</label>
    </ligand>
</feature>
<feature type="binding site" evidence="1">
    <location>
        <position position="70"/>
    </location>
    <ligand>
        <name>Mg(2+)</name>
        <dbReference type="ChEBI" id="CHEBI:18420"/>
        <label>2</label>
    </ligand>
</feature>
<feature type="binding site" evidence="1">
    <location>
        <position position="102"/>
    </location>
    <ligand>
        <name>Mg(2+)</name>
        <dbReference type="ChEBI" id="CHEBI:18420"/>
        <label>1</label>
    </ligand>
</feature>
<feature type="binding site" evidence="1">
    <location>
        <position position="141"/>
    </location>
    <ligand>
        <name>substrate</name>
    </ligand>
</feature>
<keyword id="KW-0963">Cytoplasm</keyword>
<keyword id="KW-0378">Hydrolase</keyword>
<keyword id="KW-0460">Magnesium</keyword>
<keyword id="KW-0479">Metal-binding</keyword>